<accession>Q1J457</accession>
<organism>
    <name type="scientific">Streptococcus pyogenes serotype M4 (strain MGAS10750)</name>
    <dbReference type="NCBI Taxonomy" id="370554"/>
    <lineage>
        <taxon>Bacteria</taxon>
        <taxon>Bacillati</taxon>
        <taxon>Bacillota</taxon>
        <taxon>Bacilli</taxon>
        <taxon>Lactobacillales</taxon>
        <taxon>Streptococcaceae</taxon>
        <taxon>Streptococcus</taxon>
    </lineage>
</organism>
<dbReference type="EMBL" id="CP000262">
    <property type="protein sequence ID" value="ABF38904.1"/>
    <property type="molecule type" value="Genomic_DNA"/>
</dbReference>
<dbReference type="SMR" id="Q1J457"/>
<dbReference type="KEGG" id="spi:MGAS10750_Spy1954"/>
<dbReference type="HOGENOM" id="CLU_007831_2_2_9"/>
<dbReference type="Proteomes" id="UP000002434">
    <property type="component" value="Chromosome"/>
</dbReference>
<dbReference type="GO" id="GO:0005829">
    <property type="term" value="C:cytosol"/>
    <property type="evidence" value="ECO:0007669"/>
    <property type="project" value="TreeGrafter"/>
</dbReference>
<dbReference type="GO" id="GO:0050660">
    <property type="term" value="F:flavin adenine dinucleotide binding"/>
    <property type="evidence" value="ECO:0007669"/>
    <property type="project" value="UniProtKB-UniRule"/>
</dbReference>
<dbReference type="GO" id="GO:0030488">
    <property type="term" value="P:tRNA methylation"/>
    <property type="evidence" value="ECO:0007669"/>
    <property type="project" value="TreeGrafter"/>
</dbReference>
<dbReference type="GO" id="GO:0002098">
    <property type="term" value="P:tRNA wobble uridine modification"/>
    <property type="evidence" value="ECO:0007669"/>
    <property type="project" value="InterPro"/>
</dbReference>
<dbReference type="FunFam" id="1.10.10.1800:FF:000001">
    <property type="entry name" value="tRNA uridine 5-carboxymethylaminomethyl modification enzyme MnmG"/>
    <property type="match status" value="1"/>
</dbReference>
<dbReference type="FunFam" id="1.10.150.570:FF:000001">
    <property type="entry name" value="tRNA uridine 5-carboxymethylaminomethyl modification enzyme MnmG"/>
    <property type="match status" value="1"/>
</dbReference>
<dbReference type="FunFam" id="3.50.50.60:FF:000002">
    <property type="entry name" value="tRNA uridine 5-carboxymethylaminomethyl modification enzyme MnmG"/>
    <property type="match status" value="1"/>
</dbReference>
<dbReference type="FunFam" id="3.50.50.60:FF:000063">
    <property type="entry name" value="tRNA uridine 5-carboxymethylaminomethyl modification enzyme MnmG"/>
    <property type="match status" value="1"/>
</dbReference>
<dbReference type="Gene3D" id="3.50.50.60">
    <property type="entry name" value="FAD/NAD(P)-binding domain"/>
    <property type="match status" value="2"/>
</dbReference>
<dbReference type="Gene3D" id="1.10.150.570">
    <property type="entry name" value="GidA associated domain, C-terminal subdomain"/>
    <property type="match status" value="1"/>
</dbReference>
<dbReference type="Gene3D" id="1.10.10.1800">
    <property type="entry name" value="tRNA uridine 5-carboxymethylaminomethyl modification enzyme MnmG/GidA"/>
    <property type="match status" value="1"/>
</dbReference>
<dbReference type="HAMAP" id="MF_00129">
    <property type="entry name" value="MnmG_GidA"/>
    <property type="match status" value="1"/>
</dbReference>
<dbReference type="InterPro" id="IPR036188">
    <property type="entry name" value="FAD/NAD-bd_sf"/>
</dbReference>
<dbReference type="InterPro" id="IPR049312">
    <property type="entry name" value="GIDA_C_N"/>
</dbReference>
<dbReference type="InterPro" id="IPR004416">
    <property type="entry name" value="MnmG"/>
</dbReference>
<dbReference type="InterPro" id="IPR002218">
    <property type="entry name" value="MnmG-rel"/>
</dbReference>
<dbReference type="InterPro" id="IPR020595">
    <property type="entry name" value="MnmG-rel_CS"/>
</dbReference>
<dbReference type="InterPro" id="IPR026904">
    <property type="entry name" value="MnmG_C"/>
</dbReference>
<dbReference type="InterPro" id="IPR047001">
    <property type="entry name" value="MnmG_C_subdom"/>
</dbReference>
<dbReference type="InterPro" id="IPR044920">
    <property type="entry name" value="MnmG_C_subdom_sf"/>
</dbReference>
<dbReference type="InterPro" id="IPR040131">
    <property type="entry name" value="MnmG_N"/>
</dbReference>
<dbReference type="NCBIfam" id="TIGR00136">
    <property type="entry name" value="mnmG_gidA"/>
    <property type="match status" value="1"/>
</dbReference>
<dbReference type="PANTHER" id="PTHR11806">
    <property type="entry name" value="GLUCOSE INHIBITED DIVISION PROTEIN A"/>
    <property type="match status" value="1"/>
</dbReference>
<dbReference type="PANTHER" id="PTHR11806:SF0">
    <property type="entry name" value="PROTEIN MTO1 HOMOLOG, MITOCHONDRIAL"/>
    <property type="match status" value="1"/>
</dbReference>
<dbReference type="Pfam" id="PF01134">
    <property type="entry name" value="GIDA"/>
    <property type="match status" value="1"/>
</dbReference>
<dbReference type="Pfam" id="PF21680">
    <property type="entry name" value="GIDA_C_1st"/>
    <property type="match status" value="1"/>
</dbReference>
<dbReference type="Pfam" id="PF13932">
    <property type="entry name" value="SAM_GIDA_C"/>
    <property type="match status" value="1"/>
</dbReference>
<dbReference type="PRINTS" id="PR00411">
    <property type="entry name" value="PNDRDTASEI"/>
</dbReference>
<dbReference type="SMART" id="SM01228">
    <property type="entry name" value="GIDA_assoc_3"/>
    <property type="match status" value="1"/>
</dbReference>
<dbReference type="SUPFAM" id="SSF51905">
    <property type="entry name" value="FAD/NAD(P)-binding domain"/>
    <property type="match status" value="1"/>
</dbReference>
<dbReference type="PROSITE" id="PS01280">
    <property type="entry name" value="GIDA_1"/>
    <property type="match status" value="1"/>
</dbReference>
<dbReference type="PROSITE" id="PS01281">
    <property type="entry name" value="GIDA_2"/>
    <property type="match status" value="1"/>
</dbReference>
<sequence>MTHEFTENYDVIVIGAGHAGVEASLATSRMGCKTLLATINLDMLAFMPCNPSIGGSAKGIVVREIDALGGEMGKNIDKTYIQMKMLNTGKGPAVRALRAQADKSLYAREMKHTVEKQANLTLRQTMIDDILVEDGRVVGVLTATGQKFAAKAVVVTTGTALRGEIILGELKYSSGPNNSLASVTLADNLKKLGLEIGRFKTGTPPRVKASSINYDQTEIQPGDDKPNHFSFMSKDADYLKDQIPCWLTYTNQTSHDIINQNLYRAPMFSGIVKGVGPRYCPSIEDKIVRFADKERHQLFLEPEGRDTEEVYVQGLSTSLPEDVQKDLIHSIKGLEKAEMMRTGYAIEYDIVLPHQLRATLETKLISGLFTAGQTNGTSGYEEAAGQGLIAGINAALKVQGKPELILKRSDAYIGVMIDDLVTKGTLEPYRLLTSRAEYRLILRHDNADMRLTEIGRDIGLVDDERWKAFEIKKNQFDNELKRLNSIKLKPVKATNDRVQELGFKPLTDAMTAKEFMRRPEIDYATAVSFVGPAAEDLDAKIIELLETEIKYEGYIRKALDQVAKMKRMEEKRIPANIDWDAIDSIATEARQKFKKINPETIGQASRISGVNPADISILMIYLEGNGKAHRKY</sequence>
<keyword id="KW-0963">Cytoplasm</keyword>
<keyword id="KW-0274">FAD</keyword>
<keyword id="KW-0285">Flavoprotein</keyword>
<keyword id="KW-0520">NAD</keyword>
<keyword id="KW-0819">tRNA processing</keyword>
<comment type="function">
    <text evidence="1">NAD-binding protein involved in the addition of a carboxymethylaminomethyl (cmnm) group at the wobble position (U34) of certain tRNAs, forming tRNA-cmnm(5)s(2)U34.</text>
</comment>
<comment type="cofactor">
    <cofactor evidence="1">
        <name>FAD</name>
        <dbReference type="ChEBI" id="CHEBI:57692"/>
    </cofactor>
</comment>
<comment type="subunit">
    <text evidence="1">Homodimer. Heterotetramer of two MnmE and two MnmG subunits.</text>
</comment>
<comment type="subcellular location">
    <subcellularLocation>
        <location evidence="1">Cytoplasm</location>
    </subcellularLocation>
</comment>
<comment type="similarity">
    <text evidence="1">Belongs to the MnmG family.</text>
</comment>
<gene>
    <name evidence="1" type="primary">mnmG</name>
    <name evidence="1" type="synonym">gidA</name>
    <name type="ordered locus">MGAS10750_Spy1954</name>
</gene>
<evidence type="ECO:0000255" key="1">
    <source>
        <dbReference type="HAMAP-Rule" id="MF_00129"/>
    </source>
</evidence>
<feature type="chain" id="PRO_1000016692" description="tRNA uridine 5-carboxymethylaminomethyl modification enzyme MnmG">
    <location>
        <begin position="1"/>
        <end position="632"/>
    </location>
</feature>
<feature type="binding site" evidence="1">
    <location>
        <begin position="15"/>
        <end position="20"/>
    </location>
    <ligand>
        <name>FAD</name>
        <dbReference type="ChEBI" id="CHEBI:57692"/>
    </ligand>
</feature>
<feature type="binding site" evidence="1">
    <location>
        <position position="127"/>
    </location>
    <ligand>
        <name>FAD</name>
        <dbReference type="ChEBI" id="CHEBI:57692"/>
    </ligand>
</feature>
<feature type="binding site" evidence="1">
    <location>
        <position position="182"/>
    </location>
    <ligand>
        <name>FAD</name>
        <dbReference type="ChEBI" id="CHEBI:57692"/>
    </ligand>
</feature>
<feature type="binding site" evidence="1">
    <location>
        <begin position="276"/>
        <end position="290"/>
    </location>
    <ligand>
        <name>NAD(+)</name>
        <dbReference type="ChEBI" id="CHEBI:57540"/>
    </ligand>
</feature>
<feature type="binding site" evidence="1">
    <location>
        <position position="373"/>
    </location>
    <ligand>
        <name>FAD</name>
        <dbReference type="ChEBI" id="CHEBI:57692"/>
    </ligand>
</feature>
<protein>
    <recommendedName>
        <fullName evidence="1">tRNA uridine 5-carboxymethylaminomethyl modification enzyme MnmG</fullName>
    </recommendedName>
    <alternativeName>
        <fullName evidence="1">Glucose-inhibited division protein A</fullName>
    </alternativeName>
</protein>
<reference key="1">
    <citation type="journal article" date="2006" name="Proc. Natl. Acad. Sci. U.S.A.">
        <title>Molecular genetic anatomy of inter- and intraserotype variation in the human bacterial pathogen group A Streptococcus.</title>
        <authorList>
            <person name="Beres S.B."/>
            <person name="Richter E.W."/>
            <person name="Nagiec M.J."/>
            <person name="Sumby P."/>
            <person name="Porcella S.F."/>
            <person name="DeLeo F.R."/>
            <person name="Musser J.M."/>
        </authorList>
    </citation>
    <scope>NUCLEOTIDE SEQUENCE [LARGE SCALE GENOMIC DNA]</scope>
    <source>
        <strain>MGAS10750</strain>
    </source>
</reference>
<name>MNMG_STRPF</name>
<proteinExistence type="inferred from homology"/>